<keyword id="KW-0240">DNA-directed RNA polymerase</keyword>
<keyword id="KW-0548">Nucleotidyltransferase</keyword>
<keyword id="KW-0804">Transcription</keyword>
<keyword id="KW-0808">Transferase</keyword>
<protein>
    <recommendedName>
        <fullName evidence="1">DNA-directed RNA polymerase subunit beta</fullName>
        <shortName evidence="1">RNAP subunit beta</shortName>
        <ecNumber evidence="1">2.7.7.6</ecNumber>
    </recommendedName>
    <alternativeName>
        <fullName evidence="1">RNA polymerase subunit beta</fullName>
    </alternativeName>
    <alternativeName>
        <fullName evidence="1">Transcriptase subunit beta</fullName>
    </alternativeName>
</protein>
<sequence length="1177" mass="131893">MTGQLVQYGRHRQRRSYARISEVLELPNLIEIQTSSYQWFLDEGLREMFQDISPIEDFTGNLSLEFIDYSLGEPKYSVDECKERDVTYAAPLRVKVRLINKETGEVKEQDVFMGDFPLMTETGTFVINGAERVIVSQLVRSPSVYYSGKVDKNGKRGFTATVIPNRGAWLEYETDAKDVVYVRIDRTRKLPVTVLLRALGFGSDQEITELLGDNEYLSNTLEKDNTDSTEKALLEIYERLRPGEPPTVENAKSLLVSRFFDPKRYDLANVGRYKINKKLHIKNRLFNQRLAETLVDPETGEILAAEGTILDRRTLDRILPYLEKNIGFKTAKPMGGVVEGDVELQSIKIYAPESEGERVINVIGNANITRDVKHITPGDILASISYFFNLLYKVGDTDDIDHLGNRRLRSVGELLQNQFRIGLSRMERVVRERMSIQDTNAITPQALINIRPVIASIKEFFGSSQLSQFMDQTNPLAELTHKRRLSALGPGGLTRERAGFEVRDVHYSHYGRMCPIETPEGPNIGLINSLSSFAKVNEFGFIETPYRRVDPETGLVTGHVDYLTADEEDNYVVAQANMKLSEEGEFLDEDIVARFRGENIVTNKERIDYMDVSPKQVVSAATACIPFLENDDSNRALMGANMQRQAVPLMNPESPIVGTGMEYVSAKDSGAAVICKHPGIVERVEAREVWVRRYVEVDGQTVKGDLDRYKMQKFIRSNQGTCYNQRPIVSVGNEVVKGEILADGPSMELGELALGRNVLVGFMTWDGYNYEDAIIMSERLVKDDVYTSIHIEEYESEARDTKLGPEEITRDIPNVGEDALRNLDERGIIRVGAEVKDGDLLVGKVTPKGVTELTAEERLLHAIFGEKAREVRDTSLRVPHGGGGIILDVKVFNREDGDELPPGVNQLVRAYIVQKRKISEGDKMAGRHGNKGVISRILPEEDMPYLPDGTPIDIMLNPLGVPSRMNIGQVLELHLGMAARYLGIHIATPVFDGAREEDVWGTIEEAGMANDAKTILYDGRTGEPFDNRVSVGVMYMIKLAHMVDDKLHARSTGPYSLVTQQPLGGKAQFGGQRFGEMEVWALEAYGAAYTLQEILTVKSDDVVGRVKTYEAIVKGENVPEPGVPESFKVLIKELQSLGMDVKMMSSDDTEIEMRDTEDDDDHQSADKLNVEVETTKE</sequence>
<organism>
    <name type="scientific">Bacillus cereus (strain Q1)</name>
    <dbReference type="NCBI Taxonomy" id="361100"/>
    <lineage>
        <taxon>Bacteria</taxon>
        <taxon>Bacillati</taxon>
        <taxon>Bacillota</taxon>
        <taxon>Bacilli</taxon>
        <taxon>Bacillales</taxon>
        <taxon>Bacillaceae</taxon>
        <taxon>Bacillus</taxon>
        <taxon>Bacillus cereus group</taxon>
    </lineage>
</organism>
<accession>B9IZI6</accession>
<proteinExistence type="inferred from homology"/>
<name>RPOB_BACCQ</name>
<dbReference type="EC" id="2.7.7.6" evidence="1"/>
<dbReference type="EMBL" id="CP000227">
    <property type="protein sequence ID" value="ACM10630.1"/>
    <property type="molecule type" value="Genomic_DNA"/>
</dbReference>
<dbReference type="SMR" id="B9IZI6"/>
<dbReference type="KEGG" id="bcq:BCQ_0115"/>
<dbReference type="HOGENOM" id="CLU_000524_4_1_9"/>
<dbReference type="Proteomes" id="UP000000441">
    <property type="component" value="Chromosome"/>
</dbReference>
<dbReference type="GO" id="GO:0000428">
    <property type="term" value="C:DNA-directed RNA polymerase complex"/>
    <property type="evidence" value="ECO:0007669"/>
    <property type="project" value="UniProtKB-KW"/>
</dbReference>
<dbReference type="GO" id="GO:0003677">
    <property type="term" value="F:DNA binding"/>
    <property type="evidence" value="ECO:0007669"/>
    <property type="project" value="UniProtKB-UniRule"/>
</dbReference>
<dbReference type="GO" id="GO:0003899">
    <property type="term" value="F:DNA-directed RNA polymerase activity"/>
    <property type="evidence" value="ECO:0007669"/>
    <property type="project" value="UniProtKB-UniRule"/>
</dbReference>
<dbReference type="GO" id="GO:0032549">
    <property type="term" value="F:ribonucleoside binding"/>
    <property type="evidence" value="ECO:0007669"/>
    <property type="project" value="InterPro"/>
</dbReference>
<dbReference type="GO" id="GO:0006351">
    <property type="term" value="P:DNA-templated transcription"/>
    <property type="evidence" value="ECO:0007669"/>
    <property type="project" value="UniProtKB-UniRule"/>
</dbReference>
<dbReference type="CDD" id="cd00653">
    <property type="entry name" value="RNA_pol_B_RPB2"/>
    <property type="match status" value="1"/>
</dbReference>
<dbReference type="FunFam" id="3.90.1800.10:FF:000001">
    <property type="entry name" value="DNA-directed RNA polymerase subunit beta"/>
    <property type="match status" value="1"/>
</dbReference>
<dbReference type="Gene3D" id="2.40.50.100">
    <property type="match status" value="1"/>
</dbReference>
<dbReference type="Gene3D" id="2.40.50.150">
    <property type="match status" value="1"/>
</dbReference>
<dbReference type="Gene3D" id="3.90.1100.10">
    <property type="match status" value="2"/>
</dbReference>
<dbReference type="Gene3D" id="2.30.150.10">
    <property type="entry name" value="DNA-directed RNA polymerase, beta subunit, external 1 domain"/>
    <property type="match status" value="1"/>
</dbReference>
<dbReference type="Gene3D" id="2.40.270.10">
    <property type="entry name" value="DNA-directed RNA polymerase, subunit 2, domain 6"/>
    <property type="match status" value="1"/>
</dbReference>
<dbReference type="Gene3D" id="3.90.1800.10">
    <property type="entry name" value="RNA polymerase alpha subunit dimerisation domain"/>
    <property type="match status" value="1"/>
</dbReference>
<dbReference type="Gene3D" id="3.90.1110.10">
    <property type="entry name" value="RNA polymerase Rpb2, domain 2"/>
    <property type="match status" value="1"/>
</dbReference>
<dbReference type="HAMAP" id="MF_01321">
    <property type="entry name" value="RNApol_bact_RpoB"/>
    <property type="match status" value="1"/>
</dbReference>
<dbReference type="InterPro" id="IPR042107">
    <property type="entry name" value="DNA-dir_RNA_pol_bsu_ext_1_sf"/>
</dbReference>
<dbReference type="InterPro" id="IPR019462">
    <property type="entry name" value="DNA-dir_RNA_pol_bsu_external_1"/>
</dbReference>
<dbReference type="InterPro" id="IPR015712">
    <property type="entry name" value="DNA-dir_RNA_pol_su2"/>
</dbReference>
<dbReference type="InterPro" id="IPR007120">
    <property type="entry name" value="DNA-dir_RNAP_su2_dom"/>
</dbReference>
<dbReference type="InterPro" id="IPR037033">
    <property type="entry name" value="DNA-dir_RNAP_su2_hyb_sf"/>
</dbReference>
<dbReference type="InterPro" id="IPR010243">
    <property type="entry name" value="RNA_pol_bsu_bac"/>
</dbReference>
<dbReference type="InterPro" id="IPR007121">
    <property type="entry name" value="RNA_pol_bsu_CS"/>
</dbReference>
<dbReference type="InterPro" id="IPR007644">
    <property type="entry name" value="RNA_pol_bsu_protrusion"/>
</dbReference>
<dbReference type="InterPro" id="IPR007642">
    <property type="entry name" value="RNA_pol_Rpb2_2"/>
</dbReference>
<dbReference type="InterPro" id="IPR037034">
    <property type="entry name" value="RNA_pol_Rpb2_2_sf"/>
</dbReference>
<dbReference type="InterPro" id="IPR007645">
    <property type="entry name" value="RNA_pol_Rpb2_3"/>
</dbReference>
<dbReference type="InterPro" id="IPR007641">
    <property type="entry name" value="RNA_pol_Rpb2_7"/>
</dbReference>
<dbReference type="InterPro" id="IPR014724">
    <property type="entry name" value="RNA_pol_RPB2_OB-fold"/>
</dbReference>
<dbReference type="NCBIfam" id="NF001616">
    <property type="entry name" value="PRK00405.1"/>
    <property type="match status" value="1"/>
</dbReference>
<dbReference type="NCBIfam" id="TIGR02013">
    <property type="entry name" value="rpoB"/>
    <property type="match status" value="1"/>
</dbReference>
<dbReference type="PANTHER" id="PTHR20856">
    <property type="entry name" value="DNA-DIRECTED RNA POLYMERASE I SUBUNIT 2"/>
    <property type="match status" value="1"/>
</dbReference>
<dbReference type="Pfam" id="PF04563">
    <property type="entry name" value="RNA_pol_Rpb2_1"/>
    <property type="match status" value="1"/>
</dbReference>
<dbReference type="Pfam" id="PF04561">
    <property type="entry name" value="RNA_pol_Rpb2_2"/>
    <property type="match status" value="2"/>
</dbReference>
<dbReference type="Pfam" id="PF04565">
    <property type="entry name" value="RNA_pol_Rpb2_3"/>
    <property type="match status" value="1"/>
</dbReference>
<dbReference type="Pfam" id="PF10385">
    <property type="entry name" value="RNA_pol_Rpb2_45"/>
    <property type="match status" value="1"/>
</dbReference>
<dbReference type="Pfam" id="PF00562">
    <property type="entry name" value="RNA_pol_Rpb2_6"/>
    <property type="match status" value="1"/>
</dbReference>
<dbReference type="Pfam" id="PF04560">
    <property type="entry name" value="RNA_pol_Rpb2_7"/>
    <property type="match status" value="1"/>
</dbReference>
<dbReference type="SUPFAM" id="SSF64484">
    <property type="entry name" value="beta and beta-prime subunits of DNA dependent RNA-polymerase"/>
    <property type="match status" value="1"/>
</dbReference>
<dbReference type="PROSITE" id="PS01166">
    <property type="entry name" value="RNA_POL_BETA"/>
    <property type="match status" value="1"/>
</dbReference>
<feature type="chain" id="PRO_1000165789" description="DNA-directed RNA polymerase subunit beta">
    <location>
        <begin position="1"/>
        <end position="1177"/>
    </location>
</feature>
<feature type="region of interest" description="Disordered" evidence="2">
    <location>
        <begin position="1147"/>
        <end position="1177"/>
    </location>
</feature>
<feature type="compositionally biased region" description="Acidic residues" evidence="2">
    <location>
        <begin position="1147"/>
        <end position="1161"/>
    </location>
</feature>
<feature type="compositionally biased region" description="Basic and acidic residues" evidence="2">
    <location>
        <begin position="1162"/>
        <end position="1177"/>
    </location>
</feature>
<evidence type="ECO:0000255" key="1">
    <source>
        <dbReference type="HAMAP-Rule" id="MF_01321"/>
    </source>
</evidence>
<evidence type="ECO:0000256" key="2">
    <source>
        <dbReference type="SAM" id="MobiDB-lite"/>
    </source>
</evidence>
<reference key="1">
    <citation type="journal article" date="2009" name="J. Bacteriol.">
        <title>Complete genome sequence of the extremophilic Bacillus cereus strain Q1 with industrial applications.</title>
        <authorList>
            <person name="Xiong Z."/>
            <person name="Jiang Y."/>
            <person name="Qi D."/>
            <person name="Lu H."/>
            <person name="Yang F."/>
            <person name="Yang J."/>
            <person name="Chen L."/>
            <person name="Sun L."/>
            <person name="Xu X."/>
            <person name="Xue Y."/>
            <person name="Zhu Y."/>
            <person name="Jin Q."/>
        </authorList>
    </citation>
    <scope>NUCLEOTIDE SEQUENCE [LARGE SCALE GENOMIC DNA]</scope>
    <source>
        <strain>Q1</strain>
    </source>
</reference>
<gene>
    <name evidence="1" type="primary">rpoB</name>
    <name type="ordered locus">BCQ_0115</name>
</gene>
<comment type="function">
    <text evidence="1">DNA-dependent RNA polymerase catalyzes the transcription of DNA into RNA using the four ribonucleoside triphosphates as substrates.</text>
</comment>
<comment type="catalytic activity">
    <reaction evidence="1">
        <text>RNA(n) + a ribonucleoside 5'-triphosphate = RNA(n+1) + diphosphate</text>
        <dbReference type="Rhea" id="RHEA:21248"/>
        <dbReference type="Rhea" id="RHEA-COMP:14527"/>
        <dbReference type="Rhea" id="RHEA-COMP:17342"/>
        <dbReference type="ChEBI" id="CHEBI:33019"/>
        <dbReference type="ChEBI" id="CHEBI:61557"/>
        <dbReference type="ChEBI" id="CHEBI:140395"/>
        <dbReference type="EC" id="2.7.7.6"/>
    </reaction>
</comment>
<comment type="subunit">
    <text evidence="1">The RNAP catalytic core consists of 2 alpha, 1 beta, 1 beta' and 1 omega subunit. When a sigma factor is associated with the core the holoenzyme is formed, which can initiate transcription.</text>
</comment>
<comment type="similarity">
    <text evidence="1">Belongs to the RNA polymerase beta chain family.</text>
</comment>